<organism>
    <name type="scientific">Ictalurus punctatus</name>
    <name type="common">Channel catfish</name>
    <name type="synonym">Silurus punctatus</name>
    <dbReference type="NCBI Taxonomy" id="7998"/>
    <lineage>
        <taxon>Eukaryota</taxon>
        <taxon>Metazoa</taxon>
        <taxon>Chordata</taxon>
        <taxon>Craniata</taxon>
        <taxon>Vertebrata</taxon>
        <taxon>Euteleostomi</taxon>
        <taxon>Actinopterygii</taxon>
        <taxon>Neopterygii</taxon>
        <taxon>Teleostei</taxon>
        <taxon>Ostariophysi</taxon>
        <taxon>Siluriformes</taxon>
        <taxon>Ictaluridae</taxon>
        <taxon>Ictalurus</taxon>
    </lineage>
</organism>
<keyword id="KW-1015">Disulfide bond</keyword>
<keyword id="KW-0325">Glycoprotein</keyword>
<keyword id="KW-0372">Hormone</keyword>
<keyword id="KW-0964">Secreted</keyword>
<keyword id="KW-0732">Signal</keyword>
<name>GTHB2_ICTPU</name>
<sequence>MSVPASSFLLLCFLMNSFSPAQSYILPHCEPVNETVSVEKDGCPKCLVFQTAICSGHCLTKEPVYKSPFSNIYQHVCTYRDVRYETVRLPDCRPGVDPHVTYPVALSCECTLCTMDTSDCTIESLNPDFCMTQKEYILDY</sequence>
<gene>
    <name type="primary">cgbb</name>
</gene>
<protein>
    <recommendedName>
        <fullName>Gonadotropin subunit beta-2</fullName>
    </recommendedName>
    <alternativeName>
        <fullName>GTH-II-beta</fullName>
    </alternativeName>
    <alternativeName>
        <fullName>Gonadotropin beta-II chain</fullName>
    </alternativeName>
    <alternativeName>
        <fullName>GtH beta-2</fullName>
    </alternativeName>
</protein>
<dbReference type="EMBL" id="AF112192">
    <property type="protein sequence ID" value="AAG32156.1"/>
    <property type="molecule type" value="mRNA"/>
</dbReference>
<dbReference type="RefSeq" id="NP_001187009.1">
    <property type="nucleotide sequence ID" value="NM_001200080.1"/>
</dbReference>
<dbReference type="SMR" id="Q9DG80"/>
<dbReference type="STRING" id="7998.ENSIPUP00000022977"/>
<dbReference type="GlyCosmos" id="Q9DG80">
    <property type="glycosylation" value="1 site, No reported glycans"/>
</dbReference>
<dbReference type="GeneID" id="100304481"/>
<dbReference type="KEGG" id="ipu:100304481"/>
<dbReference type="CTD" id="3972"/>
<dbReference type="OrthoDB" id="8453657at2759"/>
<dbReference type="Proteomes" id="UP000221080">
    <property type="component" value="Chromosome 3"/>
</dbReference>
<dbReference type="GO" id="GO:0005737">
    <property type="term" value="C:cytoplasm"/>
    <property type="evidence" value="ECO:0007669"/>
    <property type="project" value="TreeGrafter"/>
</dbReference>
<dbReference type="GO" id="GO:0005615">
    <property type="term" value="C:extracellular space"/>
    <property type="evidence" value="ECO:0007669"/>
    <property type="project" value="TreeGrafter"/>
</dbReference>
<dbReference type="GO" id="GO:0031762">
    <property type="term" value="F:follicle-stimulating hormone receptor binding"/>
    <property type="evidence" value="ECO:0000314"/>
    <property type="project" value="AgBase"/>
</dbReference>
<dbReference type="GO" id="GO:0005179">
    <property type="term" value="F:hormone activity"/>
    <property type="evidence" value="ECO:0007669"/>
    <property type="project" value="UniProtKB-KW"/>
</dbReference>
<dbReference type="GO" id="GO:0031775">
    <property type="term" value="F:lutropin-choriogonadotropic hormone receptor binding"/>
    <property type="evidence" value="ECO:0000314"/>
    <property type="project" value="AgBase"/>
</dbReference>
<dbReference type="GO" id="GO:0046982">
    <property type="term" value="F:protein heterodimerization activity"/>
    <property type="evidence" value="ECO:0000353"/>
    <property type="project" value="AgBase"/>
</dbReference>
<dbReference type="GO" id="GO:0007186">
    <property type="term" value="P:G protein-coupled receptor signaling pathway"/>
    <property type="evidence" value="ECO:0007669"/>
    <property type="project" value="TreeGrafter"/>
</dbReference>
<dbReference type="GO" id="GO:2000836">
    <property type="term" value="P:positive regulation of androgen secretion"/>
    <property type="evidence" value="ECO:0000315"/>
    <property type="project" value="AgBase"/>
</dbReference>
<dbReference type="GO" id="GO:2000866">
    <property type="term" value="P:positive regulation of estradiol secretion"/>
    <property type="evidence" value="ECO:0000314"/>
    <property type="project" value="AgBase"/>
</dbReference>
<dbReference type="GO" id="GO:0010628">
    <property type="term" value="P:positive regulation of gene expression"/>
    <property type="evidence" value="ECO:0000314"/>
    <property type="project" value="AgBase"/>
</dbReference>
<dbReference type="CDD" id="cd00069">
    <property type="entry name" value="GHB_like"/>
    <property type="match status" value="1"/>
</dbReference>
<dbReference type="FunFam" id="2.10.90.10:FF:000007">
    <property type="entry name" value="Luteinizing hormone beta subunit"/>
    <property type="match status" value="1"/>
</dbReference>
<dbReference type="Gene3D" id="2.10.90.10">
    <property type="entry name" value="Cystine-knot cytokines"/>
    <property type="match status" value="1"/>
</dbReference>
<dbReference type="InterPro" id="IPR029034">
    <property type="entry name" value="Cystine-knot_cytokine"/>
</dbReference>
<dbReference type="InterPro" id="IPR006208">
    <property type="entry name" value="Glyco_hormone_CN"/>
</dbReference>
<dbReference type="InterPro" id="IPR001545">
    <property type="entry name" value="Gonadotropin_bsu"/>
</dbReference>
<dbReference type="InterPro" id="IPR018245">
    <property type="entry name" value="Gonadotropin_bsu_CS"/>
</dbReference>
<dbReference type="PANTHER" id="PTHR11515">
    <property type="entry name" value="GLYCOPROTEIN HORMONE BETA CHAIN"/>
    <property type="match status" value="1"/>
</dbReference>
<dbReference type="PANTHER" id="PTHR11515:SF11">
    <property type="entry name" value="LUTROPIN SUBUNIT BETA"/>
    <property type="match status" value="1"/>
</dbReference>
<dbReference type="Pfam" id="PF00007">
    <property type="entry name" value="Cys_knot"/>
    <property type="match status" value="1"/>
</dbReference>
<dbReference type="SMART" id="SM00068">
    <property type="entry name" value="GHB"/>
    <property type="match status" value="1"/>
</dbReference>
<dbReference type="SUPFAM" id="SSF57501">
    <property type="entry name" value="Cystine-knot cytokines"/>
    <property type="match status" value="1"/>
</dbReference>
<dbReference type="PROSITE" id="PS00261">
    <property type="entry name" value="GLYCO_HORMONE_BETA_1"/>
    <property type="match status" value="1"/>
</dbReference>
<dbReference type="PROSITE" id="PS00689">
    <property type="entry name" value="GLYCO_HORMONE_BETA_2"/>
    <property type="match status" value="1"/>
</dbReference>
<feature type="signal peptide" evidence="2">
    <location>
        <begin position="1"/>
        <end position="23"/>
    </location>
</feature>
<feature type="chain" id="PRO_0000011696" description="Gonadotropin subunit beta-2">
    <location>
        <begin position="24"/>
        <end position="140"/>
    </location>
</feature>
<feature type="glycosylation site" description="N-linked (GlcNAc...) asparagine" evidence="2">
    <location>
        <position position="33"/>
    </location>
</feature>
<feature type="disulfide bond" evidence="1">
    <location>
        <begin position="29"/>
        <end position="77"/>
    </location>
</feature>
<feature type="disulfide bond" evidence="1">
    <location>
        <begin position="43"/>
        <end position="92"/>
    </location>
</feature>
<feature type="disulfide bond" evidence="1">
    <location>
        <begin position="46"/>
        <end position="130"/>
    </location>
</feature>
<feature type="disulfide bond" evidence="1">
    <location>
        <begin position="54"/>
        <end position="108"/>
    </location>
</feature>
<feature type="disulfide bond" evidence="1">
    <location>
        <begin position="58"/>
        <end position="110"/>
    </location>
</feature>
<feature type="disulfide bond" evidence="1">
    <location>
        <begin position="113"/>
        <end position="120"/>
    </location>
</feature>
<accession>Q9DG80</accession>
<proteinExistence type="evidence at transcript level"/>
<reference key="1">
    <citation type="submission" date="1998-12" db="EMBL/GenBank/DDBJ databases">
        <title>Channel catfish gonadotropin beta-subunits: cDNA cloning and their expression during ovulation.</title>
        <authorList>
            <person name="Liu Z.J."/>
            <person name="Kim S."/>
            <person name="Karsi A."/>
            <person name="Dunham R."/>
        </authorList>
    </citation>
    <scope>NUCLEOTIDE SEQUENCE [MRNA]</scope>
    <source>
        <strain>Kansas</strain>
    </source>
</reference>
<evidence type="ECO:0000250" key="1"/>
<evidence type="ECO:0000255" key="2"/>
<evidence type="ECO:0000305" key="3"/>
<comment type="function">
    <text>Involved in gametogenesis and steroidogenesis.</text>
</comment>
<comment type="subunit">
    <text>Heterodimer of an alpha and a beta chain.</text>
</comment>
<comment type="subcellular location">
    <subcellularLocation>
        <location>Secreted</location>
    </subcellularLocation>
</comment>
<comment type="similarity">
    <text evidence="3">Belongs to the glycoprotein hormones subunit beta family.</text>
</comment>